<reference key="1">
    <citation type="journal article" date="1996" name="Cell">
        <title>Cortexillins, major determinants of cell shape and size, are actin-bundling proteins with a parallel coiled-coil tail.</title>
        <authorList>
            <person name="Faix J."/>
            <person name="Steinmetz M."/>
            <person name="Boves H."/>
            <person name="Kammerer R.A."/>
            <person name="Lottspeich F."/>
            <person name="Mintert U."/>
            <person name="Murphy J."/>
            <person name="Stock A."/>
            <person name="Aebi U."/>
            <person name="Gerisch G."/>
        </authorList>
    </citation>
    <scope>NUCLEOTIDE SEQUENCE [MRNA]</scope>
    <scope>HOMODIMER</scope>
    <scope>INTERACTION WITH ACTIN</scope>
    <scope>SUBCELLULAR LOCATION</scope>
    <source>
        <strain>AX3</strain>
    </source>
</reference>
<reference key="2">
    <citation type="journal article" date="2005" name="Nature">
        <title>The genome of the social amoeba Dictyostelium discoideum.</title>
        <authorList>
            <person name="Eichinger L."/>
            <person name="Pachebat J.A."/>
            <person name="Gloeckner G."/>
            <person name="Rajandream M.A."/>
            <person name="Sucgang R."/>
            <person name="Berriman M."/>
            <person name="Song J."/>
            <person name="Olsen R."/>
            <person name="Szafranski K."/>
            <person name="Xu Q."/>
            <person name="Tunggal B."/>
            <person name="Kummerfeld S."/>
            <person name="Madera M."/>
            <person name="Konfortov B.A."/>
            <person name="Rivero F."/>
            <person name="Bankier A.T."/>
            <person name="Lehmann R."/>
            <person name="Hamlin N."/>
            <person name="Davies R."/>
            <person name="Gaudet P."/>
            <person name="Fey P."/>
            <person name="Pilcher K."/>
            <person name="Chen G."/>
            <person name="Saunders D."/>
            <person name="Sodergren E.J."/>
            <person name="Davis P."/>
            <person name="Kerhornou A."/>
            <person name="Nie X."/>
            <person name="Hall N."/>
            <person name="Anjard C."/>
            <person name="Hemphill L."/>
            <person name="Bason N."/>
            <person name="Farbrother P."/>
            <person name="Desany B."/>
            <person name="Just E."/>
            <person name="Morio T."/>
            <person name="Rost R."/>
            <person name="Churcher C.M."/>
            <person name="Cooper J."/>
            <person name="Haydock S."/>
            <person name="van Driessche N."/>
            <person name="Cronin A."/>
            <person name="Goodhead I."/>
            <person name="Muzny D.M."/>
            <person name="Mourier T."/>
            <person name="Pain A."/>
            <person name="Lu M."/>
            <person name="Harper D."/>
            <person name="Lindsay R."/>
            <person name="Hauser H."/>
            <person name="James K.D."/>
            <person name="Quiles M."/>
            <person name="Madan Babu M."/>
            <person name="Saito T."/>
            <person name="Buchrieser C."/>
            <person name="Wardroper A."/>
            <person name="Felder M."/>
            <person name="Thangavelu M."/>
            <person name="Johnson D."/>
            <person name="Knights A."/>
            <person name="Loulseged H."/>
            <person name="Mungall K.L."/>
            <person name="Oliver K."/>
            <person name="Price C."/>
            <person name="Quail M.A."/>
            <person name="Urushihara H."/>
            <person name="Hernandez J."/>
            <person name="Rabbinowitsch E."/>
            <person name="Steffen D."/>
            <person name="Sanders M."/>
            <person name="Ma J."/>
            <person name="Kohara Y."/>
            <person name="Sharp S."/>
            <person name="Simmonds M.N."/>
            <person name="Spiegler S."/>
            <person name="Tivey A."/>
            <person name="Sugano S."/>
            <person name="White B."/>
            <person name="Walker D."/>
            <person name="Woodward J.R."/>
            <person name="Winckler T."/>
            <person name="Tanaka Y."/>
            <person name="Shaulsky G."/>
            <person name="Schleicher M."/>
            <person name="Weinstock G.M."/>
            <person name="Rosenthal A."/>
            <person name="Cox E.C."/>
            <person name="Chisholm R.L."/>
            <person name="Gibbs R.A."/>
            <person name="Loomis W.F."/>
            <person name="Platzer M."/>
            <person name="Kay R.R."/>
            <person name="Williams J.G."/>
            <person name="Dear P.H."/>
            <person name="Noegel A.A."/>
            <person name="Barrell B.G."/>
            <person name="Kuspa A."/>
        </authorList>
    </citation>
    <scope>NUCLEOTIDE SEQUENCE [LARGE SCALE GENOMIC DNA]</scope>
    <source>
        <strain>AX4</strain>
    </source>
</reference>
<reference key="3">
    <citation type="journal article" date="2000" name="Structure">
        <title>The coiled-coil trigger site of the rod domain of cortexillin I unveils a distinct network of interhelical and intrahelical salt bridges.</title>
        <authorList>
            <person name="Burkhard P."/>
            <person name="Kammerer R.A."/>
            <person name="Steinmetz M.O."/>
            <person name="Bourenkov G.P."/>
            <person name="Aebi U."/>
        </authorList>
    </citation>
    <scope>X-RAY CRYSTALLOGRAPHY (2.7 ANGSTROMS) OF 243-343</scope>
</reference>
<reference key="4">
    <citation type="journal article" date="2007" name="J. Cell Biol.">
        <title>Regulation of Rap1 activity by RapGAP1 controls cell adhesion at the front of chemotaxing cells.</title>
        <authorList>
            <person name="Jeon T.J."/>
            <person name="Lee D.-J."/>
            <person name="Lee S."/>
            <person name="Weeks G."/>
            <person name="Firtel R.A."/>
        </authorList>
    </citation>
    <scope>FUNCTION</scope>
</reference>
<gene>
    <name type="primary">ctxA</name>
    <name type="ORF">DDB_G0289483</name>
</gene>
<protein>
    <recommendedName>
        <fullName>Cortexillin-1</fullName>
    </recommendedName>
    <alternativeName>
        <fullName>Cortexillin I</fullName>
    </alternativeName>
</protein>
<organism>
    <name type="scientific">Dictyostelium discoideum</name>
    <name type="common">Social amoeba</name>
    <dbReference type="NCBI Taxonomy" id="44689"/>
    <lineage>
        <taxon>Eukaryota</taxon>
        <taxon>Amoebozoa</taxon>
        <taxon>Evosea</taxon>
        <taxon>Eumycetozoa</taxon>
        <taxon>Dictyostelia</taxon>
        <taxon>Dictyosteliales</taxon>
        <taxon>Dictyosteliaceae</taxon>
        <taxon>Dictyostelium</taxon>
    </lineage>
</organism>
<evidence type="ECO:0000255" key="1"/>
<evidence type="ECO:0000255" key="2">
    <source>
        <dbReference type="PROSITE-ProRule" id="PRU00044"/>
    </source>
</evidence>
<evidence type="ECO:0000269" key="3">
    <source>
    </source>
</evidence>
<evidence type="ECO:0000269" key="4">
    <source>
    </source>
</evidence>
<evidence type="ECO:0000305" key="5"/>
<evidence type="ECO:0007829" key="6">
    <source>
        <dbReference type="PDB" id="4J4A"/>
    </source>
</evidence>
<keyword id="KW-0002">3D-structure</keyword>
<keyword id="KW-0009">Actin-binding</keyword>
<keyword id="KW-0175">Coiled coil</keyword>
<keyword id="KW-0963">Cytoplasm</keyword>
<keyword id="KW-0206">Cytoskeleton</keyword>
<keyword id="KW-1185">Reference proteome</keyword>
<keyword id="KW-0677">Repeat</keyword>
<comment type="function">
    <text evidence="3">Actin-bundling protein. When linked to F-actin the actin filaments form preferentially anti-parallel bundles that associate into meshworks. Plays a major role in cytokinesis. Negatively regulates cortical localization of rapgap1.</text>
</comment>
<comment type="subunit">
    <text>Homodimer; parallel.</text>
</comment>
<comment type="interaction">
    <interactant intactId="EBI-1810875">
        <id>Q54HG2</id>
    </interactant>
    <interactant intactId="EBI-1811057">
        <id>Q550R2</id>
        <label>ctxB</label>
    </interactant>
    <organismsDiffer>false</organismsDiffer>
    <experiments>2</experiments>
</comment>
<comment type="interaction">
    <interactant intactId="EBI-1810875">
        <id>Q54HG2</id>
    </interactant>
    <interactant intactId="EBI-1808670">
        <id>Q54K32</id>
        <label>rgaA</label>
    </interactant>
    <organismsDiffer>false</organismsDiffer>
    <experiments>2</experiments>
</comment>
<comment type="subcellular location">
    <subcellularLocation>
        <location evidence="4">Cytoplasm</location>
        <location evidence="4">Cytoskeleton</location>
    </subcellularLocation>
</comment>
<comment type="similarity">
    <text evidence="5">Belongs to the cortexillin family.</text>
</comment>
<dbReference type="EMBL" id="L49527">
    <property type="protein sequence ID" value="AAB62275.1"/>
    <property type="molecule type" value="mRNA"/>
</dbReference>
<dbReference type="EMBL" id="AAFI02000141">
    <property type="protein sequence ID" value="EAL62673.1"/>
    <property type="molecule type" value="Genomic_DNA"/>
</dbReference>
<dbReference type="RefSeq" id="XP_636175.1">
    <property type="nucleotide sequence ID" value="XM_631083.1"/>
</dbReference>
<dbReference type="PDB" id="1D7M">
    <property type="method" value="X-ray"/>
    <property type="resolution" value="2.70 A"/>
    <property type="chains" value="A/B=243-343"/>
</dbReference>
<dbReference type="PDB" id="4J4A">
    <property type="method" value="X-ray"/>
    <property type="resolution" value="1.65 A"/>
    <property type="chains" value="A/B/C/D/E/F/G/H/I/J/K/L=304-328"/>
</dbReference>
<dbReference type="PDBsum" id="1D7M"/>
<dbReference type="PDBsum" id="4J4A"/>
<dbReference type="SMR" id="Q54HG2"/>
<dbReference type="DIP" id="DIP-52435N"/>
<dbReference type="FunCoup" id="Q54HG2">
    <property type="interactions" value="4"/>
</dbReference>
<dbReference type="IntAct" id="Q54HG2">
    <property type="interactions" value="3"/>
</dbReference>
<dbReference type="STRING" id="44689.Q54HG2"/>
<dbReference type="PaxDb" id="44689-DDB0191103"/>
<dbReference type="EnsemblProtists" id="EAL62673">
    <property type="protein sequence ID" value="EAL62673"/>
    <property type="gene ID" value="DDB_G0289483"/>
</dbReference>
<dbReference type="GeneID" id="8627162"/>
<dbReference type="KEGG" id="ddi:DDB_G0289483"/>
<dbReference type="dictyBase" id="DDB_G0289483">
    <property type="gene designation" value="ctxA"/>
</dbReference>
<dbReference type="VEuPathDB" id="AmoebaDB:DDB_G0289483"/>
<dbReference type="eggNOG" id="KOG0035">
    <property type="taxonomic scope" value="Eukaryota"/>
</dbReference>
<dbReference type="HOGENOM" id="CLU_621778_0_0_1"/>
<dbReference type="InParanoid" id="Q54HG2"/>
<dbReference type="OMA" id="KNTTTGY"/>
<dbReference type="PhylomeDB" id="Q54HG2"/>
<dbReference type="EvolutionaryTrace" id="Q54HG2"/>
<dbReference type="PRO" id="PR:Q54HG2"/>
<dbReference type="Proteomes" id="UP000002195">
    <property type="component" value="Chromosome 5"/>
</dbReference>
<dbReference type="GO" id="GO:0015629">
    <property type="term" value="C:actin cytoskeleton"/>
    <property type="evidence" value="ECO:0000314"/>
    <property type="project" value="dictyBase"/>
</dbReference>
<dbReference type="GO" id="GO:0005826">
    <property type="term" value="C:actomyosin contractile ring"/>
    <property type="evidence" value="ECO:0000314"/>
    <property type="project" value="dictyBase"/>
</dbReference>
<dbReference type="GO" id="GO:0045180">
    <property type="term" value="C:basal cortex"/>
    <property type="evidence" value="ECO:0000314"/>
    <property type="project" value="dictyBase"/>
</dbReference>
<dbReference type="GO" id="GO:0005938">
    <property type="term" value="C:cell cortex"/>
    <property type="evidence" value="ECO:0000314"/>
    <property type="project" value="dictyBase"/>
</dbReference>
<dbReference type="GO" id="GO:0031252">
    <property type="term" value="C:cell leading edge"/>
    <property type="evidence" value="ECO:0000314"/>
    <property type="project" value="dictyBase"/>
</dbReference>
<dbReference type="GO" id="GO:0042995">
    <property type="term" value="C:cell projection"/>
    <property type="evidence" value="ECO:0000318"/>
    <property type="project" value="GO_Central"/>
</dbReference>
<dbReference type="GO" id="GO:0031254">
    <property type="term" value="C:cell trailing edge"/>
    <property type="evidence" value="ECO:0000314"/>
    <property type="project" value="dictyBase"/>
</dbReference>
<dbReference type="GO" id="GO:0032154">
    <property type="term" value="C:cleavage furrow"/>
    <property type="evidence" value="ECO:0000314"/>
    <property type="project" value="dictyBase"/>
</dbReference>
<dbReference type="GO" id="GO:0030864">
    <property type="term" value="C:cortical actin cytoskeleton"/>
    <property type="evidence" value="ECO:0000318"/>
    <property type="project" value="GO_Central"/>
</dbReference>
<dbReference type="GO" id="GO:0005829">
    <property type="term" value="C:cytosol"/>
    <property type="evidence" value="ECO:0000314"/>
    <property type="project" value="dictyBase"/>
</dbReference>
<dbReference type="GO" id="GO:0031255">
    <property type="term" value="C:lateral part of motile cell"/>
    <property type="evidence" value="ECO:0000314"/>
    <property type="project" value="dictyBase"/>
</dbReference>
<dbReference type="GO" id="GO:1990023">
    <property type="term" value="C:mitotic spindle midzone"/>
    <property type="evidence" value="ECO:0000314"/>
    <property type="project" value="dictyBase"/>
</dbReference>
<dbReference type="GO" id="GO:0045335">
    <property type="term" value="C:phagocytic vesicle"/>
    <property type="evidence" value="ECO:0007005"/>
    <property type="project" value="dictyBase"/>
</dbReference>
<dbReference type="GO" id="GO:0005886">
    <property type="term" value="C:plasma membrane"/>
    <property type="evidence" value="ECO:0000314"/>
    <property type="project" value="dictyBase"/>
</dbReference>
<dbReference type="GO" id="GO:0031982">
    <property type="term" value="C:vesicle"/>
    <property type="evidence" value="ECO:0000314"/>
    <property type="project" value="dictyBase"/>
</dbReference>
<dbReference type="GO" id="GO:0051015">
    <property type="term" value="F:actin filament binding"/>
    <property type="evidence" value="ECO:0000314"/>
    <property type="project" value="dictyBase"/>
</dbReference>
<dbReference type="GO" id="GO:0045294">
    <property type="term" value="F:alpha-catenin binding"/>
    <property type="evidence" value="ECO:0000353"/>
    <property type="project" value="dictyBase"/>
</dbReference>
<dbReference type="GO" id="GO:0042802">
    <property type="term" value="F:identical protein binding"/>
    <property type="evidence" value="ECO:0000353"/>
    <property type="project" value="dictyBase"/>
</dbReference>
<dbReference type="GO" id="GO:0005546">
    <property type="term" value="F:phosphatidylinositol-4,5-bisphosphate binding"/>
    <property type="evidence" value="ECO:0000314"/>
    <property type="project" value="dictyBase"/>
</dbReference>
<dbReference type="GO" id="GO:0019887">
    <property type="term" value="F:protein kinase regulator activity"/>
    <property type="evidence" value="ECO:0000316"/>
    <property type="project" value="dictyBase"/>
</dbReference>
<dbReference type="GO" id="GO:0051764">
    <property type="term" value="P:actin crosslink formation"/>
    <property type="evidence" value="ECO:0000314"/>
    <property type="project" value="dictyBase"/>
</dbReference>
<dbReference type="GO" id="GO:0030036">
    <property type="term" value="P:actin cytoskeleton organization"/>
    <property type="evidence" value="ECO:0000318"/>
    <property type="project" value="GO_Central"/>
</dbReference>
<dbReference type="GO" id="GO:0051017">
    <property type="term" value="P:actin filament bundle assembly"/>
    <property type="evidence" value="ECO:0000314"/>
    <property type="project" value="dictyBase"/>
</dbReference>
<dbReference type="GO" id="GO:0000916">
    <property type="term" value="P:actomyosin contractile ring contraction"/>
    <property type="evidence" value="ECO:0000316"/>
    <property type="project" value="dictyBase"/>
</dbReference>
<dbReference type="GO" id="GO:0140582">
    <property type="term" value="P:adenylate cyclase-activating G protein-coupled cAMP receptor signaling pathway"/>
    <property type="evidence" value="ECO:0000316"/>
    <property type="project" value="dictyBase"/>
</dbReference>
<dbReference type="GO" id="GO:0031152">
    <property type="term" value="P:aggregation involved in sorocarp development"/>
    <property type="evidence" value="ECO:0000316"/>
    <property type="project" value="dictyBase"/>
</dbReference>
<dbReference type="GO" id="GO:0032060">
    <property type="term" value="P:bleb assembly"/>
    <property type="evidence" value="ECO:0000316"/>
    <property type="project" value="dictyBase"/>
</dbReference>
<dbReference type="GO" id="GO:0000902">
    <property type="term" value="P:cell morphogenesis"/>
    <property type="evidence" value="ECO:0000315"/>
    <property type="project" value="dictyBase"/>
</dbReference>
<dbReference type="GO" id="GO:0043327">
    <property type="term" value="P:chemotaxis to cAMP"/>
    <property type="evidence" value="ECO:0000315"/>
    <property type="project" value="dictyBase"/>
</dbReference>
<dbReference type="GO" id="GO:0036089">
    <property type="term" value="P:cleavage furrow formation"/>
    <property type="evidence" value="ECO:0000315"/>
    <property type="project" value="dictyBase"/>
</dbReference>
<dbReference type="GO" id="GO:0030866">
    <property type="term" value="P:cortical actin cytoskeleton organization"/>
    <property type="evidence" value="ECO:0000316"/>
    <property type="project" value="dictyBase"/>
</dbReference>
<dbReference type="GO" id="GO:0050982">
    <property type="term" value="P:detection of mechanical stimulus"/>
    <property type="evidence" value="ECO:0000315"/>
    <property type="project" value="dictyBase"/>
</dbReference>
<dbReference type="GO" id="GO:0000281">
    <property type="term" value="P:mitotic cytokinesis"/>
    <property type="evidence" value="ECO:0000316"/>
    <property type="project" value="dictyBase"/>
</dbReference>
<dbReference type="GO" id="GO:1904777">
    <property type="term" value="P:negative regulation of protein localization to cell cortex"/>
    <property type="evidence" value="ECO:0000316"/>
    <property type="project" value="dictyBase"/>
</dbReference>
<dbReference type="GO" id="GO:0051495">
    <property type="term" value="P:positive regulation of cytoskeleton organization"/>
    <property type="evidence" value="ECO:0000315"/>
    <property type="project" value="dictyBase"/>
</dbReference>
<dbReference type="GO" id="GO:0010628">
    <property type="term" value="P:positive regulation of gene expression"/>
    <property type="evidence" value="ECO:0000315"/>
    <property type="project" value="dictyBase"/>
</dbReference>
<dbReference type="GO" id="GO:0008104">
    <property type="term" value="P:protein localization"/>
    <property type="evidence" value="ECO:0000315"/>
    <property type="project" value="dictyBase"/>
</dbReference>
<dbReference type="GO" id="GO:1905345">
    <property type="term" value="P:protein localization to cleavage furrow"/>
    <property type="evidence" value="ECO:0000315"/>
    <property type="project" value="dictyBase"/>
</dbReference>
<dbReference type="GO" id="GO:0010468">
    <property type="term" value="P:regulation of gene expression"/>
    <property type="evidence" value="ECO:0000315"/>
    <property type="project" value="dictyBase"/>
</dbReference>
<dbReference type="GO" id="GO:0043520">
    <property type="term" value="P:regulation of myosin II filament assembly"/>
    <property type="evidence" value="ECO:0000316"/>
    <property type="project" value="dictyBase"/>
</dbReference>
<dbReference type="GO" id="GO:0009617">
    <property type="term" value="P:response to bacterium"/>
    <property type="evidence" value="ECO:0007007"/>
    <property type="project" value="dictyBase"/>
</dbReference>
<dbReference type="GO" id="GO:0009612">
    <property type="term" value="P:response to mechanical stimulus"/>
    <property type="evidence" value="ECO:0000314"/>
    <property type="project" value="dictyBase"/>
</dbReference>
<dbReference type="GO" id="GO:0019953">
    <property type="term" value="P:sexual reproduction"/>
    <property type="evidence" value="ECO:0000270"/>
    <property type="project" value="dictyBase"/>
</dbReference>
<dbReference type="GO" id="GO:0036360">
    <property type="term" value="P:sorocarp stalk morphogenesis"/>
    <property type="evidence" value="ECO:0000315"/>
    <property type="project" value="dictyBase"/>
</dbReference>
<dbReference type="CDD" id="cd21225">
    <property type="entry name" value="CH_CTX_rpt1"/>
    <property type="match status" value="1"/>
</dbReference>
<dbReference type="CDD" id="cd21226">
    <property type="entry name" value="CH_CTX_rpt2"/>
    <property type="match status" value="1"/>
</dbReference>
<dbReference type="FunFam" id="1.10.418.10:FF:000138">
    <property type="entry name" value="Cortexillin I"/>
    <property type="match status" value="1"/>
</dbReference>
<dbReference type="FunFam" id="1.20.5.340:FF:000071">
    <property type="entry name" value="Cortexillin-1"/>
    <property type="match status" value="1"/>
</dbReference>
<dbReference type="Gene3D" id="1.20.5.340">
    <property type="match status" value="1"/>
</dbReference>
<dbReference type="Gene3D" id="1.10.418.10">
    <property type="entry name" value="Calponin-like domain"/>
    <property type="match status" value="2"/>
</dbReference>
<dbReference type="InterPro" id="IPR001589">
    <property type="entry name" value="Actinin_actin-bd_CS"/>
</dbReference>
<dbReference type="InterPro" id="IPR001715">
    <property type="entry name" value="CH_dom"/>
</dbReference>
<dbReference type="InterPro" id="IPR036872">
    <property type="entry name" value="CH_dom_sf"/>
</dbReference>
<dbReference type="InterPro" id="IPR015383">
    <property type="entry name" value="Cortexillin-I_coiled-coil"/>
</dbReference>
<dbReference type="PANTHER" id="PTHR11915">
    <property type="entry name" value="SPECTRIN/FILAMIN RELATED CYTOSKELETAL PROTEIN"/>
    <property type="match status" value="1"/>
</dbReference>
<dbReference type="Pfam" id="PF00307">
    <property type="entry name" value="CH"/>
    <property type="match status" value="2"/>
</dbReference>
<dbReference type="Pfam" id="PF09304">
    <property type="entry name" value="Cortex-I_coil"/>
    <property type="match status" value="1"/>
</dbReference>
<dbReference type="SMART" id="SM00033">
    <property type="entry name" value="CH"/>
    <property type="match status" value="2"/>
</dbReference>
<dbReference type="SUPFAM" id="SSF47576">
    <property type="entry name" value="Calponin-homology domain, CH-domain"/>
    <property type="match status" value="1"/>
</dbReference>
<dbReference type="SUPFAM" id="SSF58018">
    <property type="entry name" value="Coiled-coil dimerization domain from cortexillin I"/>
    <property type="match status" value="1"/>
</dbReference>
<dbReference type="PROSITE" id="PS00019">
    <property type="entry name" value="ACTININ_1"/>
    <property type="match status" value="1"/>
</dbReference>
<dbReference type="PROSITE" id="PS50021">
    <property type="entry name" value="CH"/>
    <property type="match status" value="2"/>
</dbReference>
<proteinExistence type="evidence at protein level"/>
<sequence length="444" mass="50505">MAGKDWEIVQEKAFTAWVNSVLDKRGEKISDVGKDLSDGVKLIFFLELISSKKFNKKYDFEPKARINMIQNVALALKFLDEELKIKVQGIGSEDFVDNNKKMILGFLWTLYRKYRIAVISEGDKSSEEGLLLWCKNTTTGYDGVNITSFTKSFRDGLAFLALSHKFEPESFKFQEFEAMDPIARLNAAFDFAEKGLGVPKLLEAEEVMRGTTDERSLVLYTSLFFHAYRAKEEKARLESSKNEMANRLAGLENSLESEKVSREQLIKQKDQLNSLLASLESEGAEREKRLRELEAKLDETLKNLELEKLARMELEARLAKTEKDRAILELKLAEAIDEKSKLEQQIEATRIRGAAEAQGLGLLRKNLDTHVHDLLKWQKLTMENSSSSSIDDQIIVEVSGLPFGEQVKHLATKLEAENLAIMKLLNQKEDDLKAQKLKSSKSKK</sequence>
<feature type="chain" id="PRO_0000312776" description="Cortexillin-1">
    <location>
        <begin position="1"/>
        <end position="444"/>
    </location>
</feature>
<feature type="domain" description="Calponin-homology (CH) 1" evidence="2">
    <location>
        <begin position="8"/>
        <end position="115"/>
    </location>
</feature>
<feature type="domain" description="Calponin-homology (CH) 2" evidence="2">
    <location>
        <begin position="124"/>
        <end position="229"/>
    </location>
</feature>
<feature type="region of interest" description="Actin-binding">
    <location>
        <begin position="1"/>
        <end position="227"/>
    </location>
</feature>
<feature type="coiled-coil region" evidence="1">
    <location>
        <begin position="227"/>
        <end position="352"/>
    </location>
</feature>
<feature type="coiled-coil region" evidence="1">
    <location>
        <begin position="410"/>
        <end position="434"/>
    </location>
</feature>
<feature type="helix" evidence="6">
    <location>
        <begin position="303"/>
        <end position="324"/>
    </location>
</feature>
<name>CTXA_DICDI</name>
<accession>Q54HG2</accession>
<accession>O15813</accession>